<accession>Q47ZQ7</accession>
<gene>
    <name type="ordered locus">CPS_3013</name>
</gene>
<organism>
    <name type="scientific">Colwellia psychrerythraea (strain 34H / ATCC BAA-681)</name>
    <name type="common">Vibrio psychroerythus</name>
    <dbReference type="NCBI Taxonomy" id="167879"/>
    <lineage>
        <taxon>Bacteria</taxon>
        <taxon>Pseudomonadati</taxon>
        <taxon>Pseudomonadota</taxon>
        <taxon>Gammaproteobacteria</taxon>
        <taxon>Alteromonadales</taxon>
        <taxon>Colwelliaceae</taxon>
        <taxon>Colwellia</taxon>
    </lineage>
</organism>
<comment type="function">
    <text evidence="1">Bifunctional serine/threonine kinase and phosphorylase involved in the regulation of the phosphoenolpyruvate synthase (PEPS) by catalyzing its phosphorylation/dephosphorylation.</text>
</comment>
<comment type="catalytic activity">
    <reaction evidence="1">
        <text>[pyruvate, water dikinase] + ADP = [pyruvate, water dikinase]-phosphate + AMP + H(+)</text>
        <dbReference type="Rhea" id="RHEA:46020"/>
        <dbReference type="Rhea" id="RHEA-COMP:11425"/>
        <dbReference type="Rhea" id="RHEA-COMP:11426"/>
        <dbReference type="ChEBI" id="CHEBI:15378"/>
        <dbReference type="ChEBI" id="CHEBI:43176"/>
        <dbReference type="ChEBI" id="CHEBI:68546"/>
        <dbReference type="ChEBI" id="CHEBI:456215"/>
        <dbReference type="ChEBI" id="CHEBI:456216"/>
        <dbReference type="EC" id="2.7.11.33"/>
    </reaction>
</comment>
<comment type="catalytic activity">
    <reaction evidence="1">
        <text>[pyruvate, water dikinase]-phosphate + phosphate + H(+) = [pyruvate, water dikinase] + diphosphate</text>
        <dbReference type="Rhea" id="RHEA:48580"/>
        <dbReference type="Rhea" id="RHEA-COMP:11425"/>
        <dbReference type="Rhea" id="RHEA-COMP:11426"/>
        <dbReference type="ChEBI" id="CHEBI:15378"/>
        <dbReference type="ChEBI" id="CHEBI:33019"/>
        <dbReference type="ChEBI" id="CHEBI:43176"/>
        <dbReference type="ChEBI" id="CHEBI:43474"/>
        <dbReference type="ChEBI" id="CHEBI:68546"/>
        <dbReference type="EC" id="2.7.4.28"/>
    </reaction>
</comment>
<comment type="similarity">
    <text evidence="1">Belongs to the pyruvate, phosphate/water dikinase regulatory protein family. PSRP subfamily.</text>
</comment>
<proteinExistence type="inferred from homology"/>
<sequence length="269" mass="30606">MRSAFYISDGTAITSEVFGHALLSLFPTEFEHHTISFIETTEKALAAKERINKATSRGGKPALVFHTFVNNENREIIESCDAVLYNFLEPFVAPLEKELAIKAKPTTHRTHSIHEKSYDYRIEAVNYALTNDDGSNVTNYEEADVILVGVSRSGKTPSSLYLALQYGIKAANYPFTDDDMEELKIPSFLKPFHKKLFGLTIDAQRLIDIRDGRMANSKYSSARQCRMEVREVEKLYKNEQIPFINTTKLSVEEITAKILTETGLQRYKY</sequence>
<name>PSRP_COLP3</name>
<dbReference type="EC" id="2.7.11.33" evidence="1"/>
<dbReference type="EC" id="2.7.4.28" evidence="1"/>
<dbReference type="EMBL" id="CP000083">
    <property type="protein sequence ID" value="AAZ25359.1"/>
    <property type="molecule type" value="Genomic_DNA"/>
</dbReference>
<dbReference type="RefSeq" id="WP_011043801.1">
    <property type="nucleotide sequence ID" value="NC_003910.7"/>
</dbReference>
<dbReference type="SMR" id="Q47ZQ7"/>
<dbReference type="STRING" id="167879.CPS_3013"/>
<dbReference type="KEGG" id="cps:CPS_3013"/>
<dbReference type="eggNOG" id="COG1806">
    <property type="taxonomic scope" value="Bacteria"/>
</dbReference>
<dbReference type="HOGENOM" id="CLU_046206_1_0_6"/>
<dbReference type="Proteomes" id="UP000000547">
    <property type="component" value="Chromosome"/>
</dbReference>
<dbReference type="GO" id="GO:0043531">
    <property type="term" value="F:ADP binding"/>
    <property type="evidence" value="ECO:0007669"/>
    <property type="project" value="UniProtKB-UniRule"/>
</dbReference>
<dbReference type="GO" id="GO:0005524">
    <property type="term" value="F:ATP binding"/>
    <property type="evidence" value="ECO:0007669"/>
    <property type="project" value="InterPro"/>
</dbReference>
<dbReference type="GO" id="GO:0016776">
    <property type="term" value="F:phosphotransferase activity, phosphate group as acceptor"/>
    <property type="evidence" value="ECO:0007669"/>
    <property type="project" value="UniProtKB-UniRule"/>
</dbReference>
<dbReference type="GO" id="GO:0004674">
    <property type="term" value="F:protein serine/threonine kinase activity"/>
    <property type="evidence" value="ECO:0007669"/>
    <property type="project" value="UniProtKB-UniRule"/>
</dbReference>
<dbReference type="HAMAP" id="MF_01062">
    <property type="entry name" value="PSRP"/>
    <property type="match status" value="1"/>
</dbReference>
<dbReference type="InterPro" id="IPR005177">
    <property type="entry name" value="Kinase-pyrophosphorylase"/>
</dbReference>
<dbReference type="InterPro" id="IPR026530">
    <property type="entry name" value="PSRP"/>
</dbReference>
<dbReference type="NCBIfam" id="NF003742">
    <property type="entry name" value="PRK05339.1"/>
    <property type="match status" value="1"/>
</dbReference>
<dbReference type="PANTHER" id="PTHR31756">
    <property type="entry name" value="PYRUVATE, PHOSPHATE DIKINASE REGULATORY PROTEIN 1, CHLOROPLASTIC"/>
    <property type="match status" value="1"/>
</dbReference>
<dbReference type="PANTHER" id="PTHR31756:SF3">
    <property type="entry name" value="PYRUVATE, PHOSPHATE DIKINASE REGULATORY PROTEIN 1, CHLOROPLASTIC"/>
    <property type="match status" value="1"/>
</dbReference>
<dbReference type="Pfam" id="PF03618">
    <property type="entry name" value="Kinase-PPPase"/>
    <property type="match status" value="1"/>
</dbReference>
<feature type="chain" id="PRO_0000196647" description="Putative phosphoenolpyruvate synthase regulatory protein">
    <location>
        <begin position="1"/>
        <end position="269"/>
    </location>
</feature>
<feature type="binding site" evidence="1">
    <location>
        <begin position="149"/>
        <end position="156"/>
    </location>
    <ligand>
        <name>ADP</name>
        <dbReference type="ChEBI" id="CHEBI:456216"/>
    </ligand>
</feature>
<evidence type="ECO:0000255" key="1">
    <source>
        <dbReference type="HAMAP-Rule" id="MF_01062"/>
    </source>
</evidence>
<protein>
    <recommendedName>
        <fullName evidence="1">Putative phosphoenolpyruvate synthase regulatory protein</fullName>
        <shortName evidence="1">PEP synthase regulatory protein</shortName>
        <shortName evidence="1">PSRP</shortName>
        <ecNumber evidence="1">2.7.11.33</ecNumber>
        <ecNumber evidence="1">2.7.4.28</ecNumber>
    </recommendedName>
    <alternativeName>
        <fullName evidence="1">Pyruvate, water dikinase regulatory protein</fullName>
    </alternativeName>
</protein>
<keyword id="KW-0418">Kinase</keyword>
<keyword id="KW-0547">Nucleotide-binding</keyword>
<keyword id="KW-0723">Serine/threonine-protein kinase</keyword>
<keyword id="KW-0808">Transferase</keyword>
<reference key="1">
    <citation type="journal article" date="2005" name="Proc. Natl. Acad. Sci. U.S.A.">
        <title>The psychrophilic lifestyle as revealed by the genome sequence of Colwellia psychrerythraea 34H through genomic and proteomic analyses.</title>
        <authorList>
            <person name="Methe B.A."/>
            <person name="Nelson K.E."/>
            <person name="Deming J.W."/>
            <person name="Momen B."/>
            <person name="Melamud E."/>
            <person name="Zhang X."/>
            <person name="Moult J."/>
            <person name="Madupu R."/>
            <person name="Nelson W.C."/>
            <person name="Dodson R.J."/>
            <person name="Brinkac L.M."/>
            <person name="Daugherty S.C."/>
            <person name="Durkin A.S."/>
            <person name="DeBoy R.T."/>
            <person name="Kolonay J.F."/>
            <person name="Sullivan S.A."/>
            <person name="Zhou L."/>
            <person name="Davidsen T.M."/>
            <person name="Wu M."/>
            <person name="Huston A.L."/>
            <person name="Lewis M."/>
            <person name="Weaver B."/>
            <person name="Weidman J.F."/>
            <person name="Khouri H."/>
            <person name="Utterback T.R."/>
            <person name="Feldblyum T.V."/>
            <person name="Fraser C.M."/>
        </authorList>
    </citation>
    <scope>NUCLEOTIDE SEQUENCE [LARGE SCALE GENOMIC DNA]</scope>
    <source>
        <strain>34H / ATCC BAA-681</strain>
    </source>
</reference>